<organism>
    <name type="scientific">Ipomoea purpurea</name>
    <name type="common">Common morning glory</name>
    <name type="synonym">Pharbitis purpurea</name>
    <dbReference type="NCBI Taxonomy" id="4121"/>
    <lineage>
        <taxon>Eukaryota</taxon>
        <taxon>Viridiplantae</taxon>
        <taxon>Streptophyta</taxon>
        <taxon>Embryophyta</taxon>
        <taxon>Tracheophyta</taxon>
        <taxon>Spermatophyta</taxon>
        <taxon>Magnoliopsida</taxon>
        <taxon>eudicotyledons</taxon>
        <taxon>Gunneridae</taxon>
        <taxon>Pentapetalae</taxon>
        <taxon>asterids</taxon>
        <taxon>lamiids</taxon>
        <taxon>Solanales</taxon>
        <taxon>Convolvulaceae</taxon>
        <taxon>Ipomoeeae</taxon>
        <taxon>Ipomoea</taxon>
    </lineage>
</organism>
<geneLocation type="chloroplast"/>
<feature type="chain" id="PRO_0000323328" description="Small ribosomal subunit protein uS3c">
    <location>
        <begin position="1"/>
        <end position="218"/>
    </location>
</feature>
<feature type="domain" description="KH type-2">
    <location>
        <begin position="39"/>
        <end position="118"/>
    </location>
</feature>
<proteinExistence type="inferred from homology"/>
<evidence type="ECO:0000250" key="1"/>
<evidence type="ECO:0000305" key="2"/>
<comment type="subunit">
    <text evidence="1">Part of the 30S ribosomal subunit.</text>
</comment>
<comment type="subcellular location">
    <subcellularLocation>
        <location>Plastid</location>
        <location>Chloroplast</location>
    </subcellularLocation>
</comment>
<comment type="similarity">
    <text evidence="2">Belongs to the universal ribosomal protein uS3 family.</text>
</comment>
<protein>
    <recommendedName>
        <fullName evidence="2">Small ribosomal subunit protein uS3c</fullName>
    </recommendedName>
    <alternativeName>
        <fullName>30S ribosomal protein S3, chloroplastic</fullName>
    </alternativeName>
</protein>
<gene>
    <name type="primary">rps3</name>
</gene>
<sequence>MGQKINPLGFRLGTTQGHHSLWFSQPKNYSESLQEDQKIRNFIKNYVQKNMITSSGVTGIARIDIQKGIDLIKVIIFMGFPKLLIENRPRATEELQMTLQKELNCVNRKLNIAITRIAKPYGNPKILAEFIAGQLKNRVSFRKAMKKAIELAEKADTKGIQVQIAGRIDGKEIARVEWIREGRVPRQTIRAKIDYCSYPVRTIYGVLGIKIWIFLDEA</sequence>
<keyword id="KW-0150">Chloroplast</keyword>
<keyword id="KW-0934">Plastid</keyword>
<keyword id="KW-0687">Ribonucleoprotein</keyword>
<keyword id="KW-0689">Ribosomal protein</keyword>
<keyword id="KW-0694">RNA-binding</keyword>
<keyword id="KW-0699">rRNA-binding</keyword>
<name>RR3_IPOPU</name>
<accession>A7Y3I9</accession>
<reference key="1">
    <citation type="journal article" date="2007" name="BMC Plant Biol.">
        <title>Complete plastid genome sequences suggest strong selection for retention of photosynthetic genes in the parasitic plant genus Cuscuta.</title>
        <authorList>
            <person name="McNeal J.R."/>
            <person name="Kuehl J.V."/>
            <person name="Boore J.L."/>
            <person name="dePamphilis C.W."/>
        </authorList>
    </citation>
    <scope>NUCLEOTIDE SEQUENCE [LARGE SCALE GENOMIC DNA]</scope>
</reference>
<dbReference type="EMBL" id="EU118126">
    <property type="protein sequence ID" value="ABV02386.1"/>
    <property type="molecule type" value="Genomic_DNA"/>
</dbReference>
<dbReference type="RefSeq" id="YP_001468346.1">
    <property type="nucleotide sequence ID" value="NC_009808.1"/>
</dbReference>
<dbReference type="SMR" id="A7Y3I9"/>
<dbReference type="GeneID" id="5601285"/>
<dbReference type="GO" id="GO:0009507">
    <property type="term" value="C:chloroplast"/>
    <property type="evidence" value="ECO:0007669"/>
    <property type="project" value="UniProtKB-SubCell"/>
</dbReference>
<dbReference type="GO" id="GO:0022627">
    <property type="term" value="C:cytosolic small ribosomal subunit"/>
    <property type="evidence" value="ECO:0007669"/>
    <property type="project" value="TreeGrafter"/>
</dbReference>
<dbReference type="GO" id="GO:0019843">
    <property type="term" value="F:rRNA binding"/>
    <property type="evidence" value="ECO:0007669"/>
    <property type="project" value="UniProtKB-KW"/>
</dbReference>
<dbReference type="GO" id="GO:0003735">
    <property type="term" value="F:structural constituent of ribosome"/>
    <property type="evidence" value="ECO:0007669"/>
    <property type="project" value="InterPro"/>
</dbReference>
<dbReference type="GO" id="GO:0006412">
    <property type="term" value="P:translation"/>
    <property type="evidence" value="ECO:0007669"/>
    <property type="project" value="UniProtKB-UniRule"/>
</dbReference>
<dbReference type="CDD" id="cd02412">
    <property type="entry name" value="KH-II_30S_S3"/>
    <property type="match status" value="1"/>
</dbReference>
<dbReference type="FunFam" id="3.30.1140.32:FF:000003">
    <property type="entry name" value="30S ribosomal protein S3, chloroplastic"/>
    <property type="match status" value="1"/>
</dbReference>
<dbReference type="FunFam" id="3.30.300.20:FF:000008">
    <property type="entry name" value="30S ribosomal protein S3, chloroplastic"/>
    <property type="match status" value="1"/>
</dbReference>
<dbReference type="Gene3D" id="3.30.300.20">
    <property type="match status" value="1"/>
</dbReference>
<dbReference type="Gene3D" id="3.30.1140.32">
    <property type="entry name" value="Ribosomal protein S3, C-terminal domain"/>
    <property type="match status" value="1"/>
</dbReference>
<dbReference type="HAMAP" id="MF_01309_B">
    <property type="entry name" value="Ribosomal_uS3_B"/>
    <property type="match status" value="1"/>
</dbReference>
<dbReference type="InterPro" id="IPR015946">
    <property type="entry name" value="KH_dom-like_a/b"/>
</dbReference>
<dbReference type="InterPro" id="IPR009019">
    <property type="entry name" value="KH_sf_prok-type"/>
</dbReference>
<dbReference type="InterPro" id="IPR036419">
    <property type="entry name" value="Ribosomal_S3_C_sf"/>
</dbReference>
<dbReference type="InterPro" id="IPR005704">
    <property type="entry name" value="Ribosomal_uS3_bac-typ"/>
</dbReference>
<dbReference type="InterPro" id="IPR001351">
    <property type="entry name" value="Ribosomal_uS3_C"/>
</dbReference>
<dbReference type="InterPro" id="IPR018280">
    <property type="entry name" value="Ribosomal_uS3_CS"/>
</dbReference>
<dbReference type="NCBIfam" id="TIGR01009">
    <property type="entry name" value="rpsC_bact"/>
    <property type="match status" value="1"/>
</dbReference>
<dbReference type="PANTHER" id="PTHR11760">
    <property type="entry name" value="30S/40S RIBOSOMAL PROTEIN S3"/>
    <property type="match status" value="1"/>
</dbReference>
<dbReference type="PANTHER" id="PTHR11760:SF19">
    <property type="entry name" value="SMALL RIBOSOMAL SUBUNIT PROTEIN US3C"/>
    <property type="match status" value="1"/>
</dbReference>
<dbReference type="Pfam" id="PF00189">
    <property type="entry name" value="Ribosomal_S3_C"/>
    <property type="match status" value="1"/>
</dbReference>
<dbReference type="SUPFAM" id="SSF54814">
    <property type="entry name" value="Prokaryotic type KH domain (KH-domain type II)"/>
    <property type="match status" value="1"/>
</dbReference>
<dbReference type="SUPFAM" id="SSF54821">
    <property type="entry name" value="Ribosomal protein S3 C-terminal domain"/>
    <property type="match status" value="1"/>
</dbReference>
<dbReference type="PROSITE" id="PS00548">
    <property type="entry name" value="RIBOSOMAL_S3"/>
    <property type="match status" value="1"/>
</dbReference>